<proteinExistence type="inferred from homology"/>
<organism>
    <name type="scientific">Actinobacillus pleuropneumoniae serotype 5b (strain L20)</name>
    <dbReference type="NCBI Taxonomy" id="416269"/>
    <lineage>
        <taxon>Bacteria</taxon>
        <taxon>Pseudomonadati</taxon>
        <taxon>Pseudomonadota</taxon>
        <taxon>Gammaproteobacteria</taxon>
        <taxon>Pasteurellales</taxon>
        <taxon>Pasteurellaceae</taxon>
        <taxon>Actinobacillus</taxon>
    </lineage>
</organism>
<protein>
    <recommendedName>
        <fullName evidence="1">ATP-dependent Clp protease proteolytic subunit</fullName>
        <ecNumber evidence="1">3.4.21.92</ecNumber>
    </recommendedName>
    <alternativeName>
        <fullName evidence="1">Endopeptidase Clp</fullName>
    </alternativeName>
</protein>
<comment type="function">
    <text evidence="1">Cleaves peptides in various proteins in a process that requires ATP hydrolysis. Has a chymotrypsin-like activity. Plays a major role in the degradation of misfolded proteins.</text>
</comment>
<comment type="catalytic activity">
    <reaction evidence="1">
        <text>Hydrolysis of proteins to small peptides in the presence of ATP and magnesium. alpha-casein is the usual test substrate. In the absence of ATP, only oligopeptides shorter than five residues are hydrolyzed (such as succinyl-Leu-Tyr-|-NHMec, and Leu-Tyr-Leu-|-Tyr-Trp, in which cleavage of the -Tyr-|-Leu- and -Tyr-|-Trp bonds also occurs).</text>
        <dbReference type="EC" id="3.4.21.92"/>
    </reaction>
</comment>
<comment type="subunit">
    <text evidence="1">Fourteen ClpP subunits assemble into 2 heptameric rings which stack back to back to give a disk-like structure with a central cavity, resembling the structure of eukaryotic proteasomes.</text>
</comment>
<comment type="subcellular location">
    <subcellularLocation>
        <location evidence="1">Cytoplasm</location>
    </subcellularLocation>
</comment>
<comment type="similarity">
    <text evidence="1">Belongs to the peptidase S14 family.</text>
</comment>
<evidence type="ECO:0000255" key="1">
    <source>
        <dbReference type="HAMAP-Rule" id="MF_00444"/>
    </source>
</evidence>
<feature type="chain" id="PRO_1000026061" description="ATP-dependent Clp protease proteolytic subunit">
    <location>
        <begin position="1"/>
        <end position="196"/>
    </location>
</feature>
<feature type="active site" description="Nucleophile" evidence="1">
    <location>
        <position position="98"/>
    </location>
</feature>
<feature type="active site" evidence="1">
    <location>
        <position position="123"/>
    </location>
</feature>
<keyword id="KW-0963">Cytoplasm</keyword>
<keyword id="KW-0378">Hydrolase</keyword>
<keyword id="KW-0645">Protease</keyword>
<keyword id="KW-1185">Reference proteome</keyword>
<keyword id="KW-0720">Serine protease</keyword>
<gene>
    <name evidence="1" type="primary">clpP</name>
    <name type="ordered locus">APL_1280</name>
</gene>
<sequence>MALVPIVVEQTSKGERSYDIYSRLLKERIIFLTGQVEDHMANLIVAQMLFLEAEDPEKDIYLYINSPGGVVTAGLAIYDTMNFIKPDVATLCTGQACSMGAFLLSGGAKGKRFALPNARVMIHQPLGGARGQATDIQIQAQEILKLKEMLTRKMAEHSGQPFEKVAADTERDNFMSAVEAMEYGLIDKVLTHRDMK</sequence>
<accession>A3N1T0</accession>
<reference key="1">
    <citation type="journal article" date="2008" name="J. Bacteriol.">
        <title>The complete genome sequence of Actinobacillus pleuropneumoniae L20 (serotype 5b).</title>
        <authorList>
            <person name="Foote S.J."/>
            <person name="Bosse J.T."/>
            <person name="Bouevitch A.B."/>
            <person name="Langford P.R."/>
            <person name="Young N.M."/>
            <person name="Nash J.H.E."/>
        </authorList>
    </citation>
    <scope>NUCLEOTIDE SEQUENCE [LARGE SCALE GENOMIC DNA]</scope>
    <source>
        <strain>L20</strain>
    </source>
</reference>
<dbReference type="EC" id="3.4.21.92" evidence="1"/>
<dbReference type="EMBL" id="CP000569">
    <property type="protein sequence ID" value="ABN74366.1"/>
    <property type="molecule type" value="Genomic_DNA"/>
</dbReference>
<dbReference type="RefSeq" id="WP_005598326.1">
    <property type="nucleotide sequence ID" value="NC_009053.1"/>
</dbReference>
<dbReference type="SMR" id="A3N1T0"/>
<dbReference type="STRING" id="416269.APL_1280"/>
<dbReference type="MEROPS" id="S14.001"/>
<dbReference type="EnsemblBacteria" id="ABN74366">
    <property type="protein sequence ID" value="ABN74366"/>
    <property type="gene ID" value="APL_1280"/>
</dbReference>
<dbReference type="GeneID" id="48599522"/>
<dbReference type="KEGG" id="apl:APL_1280"/>
<dbReference type="eggNOG" id="COG0740">
    <property type="taxonomic scope" value="Bacteria"/>
</dbReference>
<dbReference type="HOGENOM" id="CLU_058707_3_2_6"/>
<dbReference type="Proteomes" id="UP000001432">
    <property type="component" value="Chromosome"/>
</dbReference>
<dbReference type="GO" id="GO:0005737">
    <property type="term" value="C:cytoplasm"/>
    <property type="evidence" value="ECO:0007669"/>
    <property type="project" value="UniProtKB-SubCell"/>
</dbReference>
<dbReference type="GO" id="GO:0009368">
    <property type="term" value="C:endopeptidase Clp complex"/>
    <property type="evidence" value="ECO:0007669"/>
    <property type="project" value="TreeGrafter"/>
</dbReference>
<dbReference type="GO" id="GO:0004176">
    <property type="term" value="F:ATP-dependent peptidase activity"/>
    <property type="evidence" value="ECO:0007669"/>
    <property type="project" value="InterPro"/>
</dbReference>
<dbReference type="GO" id="GO:0051117">
    <property type="term" value="F:ATPase binding"/>
    <property type="evidence" value="ECO:0007669"/>
    <property type="project" value="TreeGrafter"/>
</dbReference>
<dbReference type="GO" id="GO:0004252">
    <property type="term" value="F:serine-type endopeptidase activity"/>
    <property type="evidence" value="ECO:0007669"/>
    <property type="project" value="UniProtKB-UniRule"/>
</dbReference>
<dbReference type="GO" id="GO:0006515">
    <property type="term" value="P:protein quality control for misfolded or incompletely synthesized proteins"/>
    <property type="evidence" value="ECO:0007669"/>
    <property type="project" value="TreeGrafter"/>
</dbReference>
<dbReference type="CDD" id="cd07017">
    <property type="entry name" value="S14_ClpP_2"/>
    <property type="match status" value="1"/>
</dbReference>
<dbReference type="FunFam" id="3.90.226.10:FF:000001">
    <property type="entry name" value="ATP-dependent Clp protease proteolytic subunit"/>
    <property type="match status" value="1"/>
</dbReference>
<dbReference type="Gene3D" id="3.90.226.10">
    <property type="entry name" value="2-enoyl-CoA Hydratase, Chain A, domain 1"/>
    <property type="match status" value="1"/>
</dbReference>
<dbReference type="HAMAP" id="MF_00444">
    <property type="entry name" value="ClpP"/>
    <property type="match status" value="1"/>
</dbReference>
<dbReference type="InterPro" id="IPR001907">
    <property type="entry name" value="ClpP"/>
</dbReference>
<dbReference type="InterPro" id="IPR029045">
    <property type="entry name" value="ClpP/crotonase-like_dom_sf"/>
</dbReference>
<dbReference type="InterPro" id="IPR023562">
    <property type="entry name" value="ClpP/TepA"/>
</dbReference>
<dbReference type="InterPro" id="IPR033135">
    <property type="entry name" value="ClpP_His_AS"/>
</dbReference>
<dbReference type="NCBIfam" id="TIGR00493">
    <property type="entry name" value="clpP"/>
    <property type="match status" value="1"/>
</dbReference>
<dbReference type="NCBIfam" id="NF001368">
    <property type="entry name" value="PRK00277.1"/>
    <property type="match status" value="1"/>
</dbReference>
<dbReference type="NCBIfam" id="NF009205">
    <property type="entry name" value="PRK12553.1"/>
    <property type="match status" value="1"/>
</dbReference>
<dbReference type="PANTHER" id="PTHR10381">
    <property type="entry name" value="ATP-DEPENDENT CLP PROTEASE PROTEOLYTIC SUBUNIT"/>
    <property type="match status" value="1"/>
</dbReference>
<dbReference type="PANTHER" id="PTHR10381:SF70">
    <property type="entry name" value="ATP-DEPENDENT CLP PROTEASE PROTEOLYTIC SUBUNIT"/>
    <property type="match status" value="1"/>
</dbReference>
<dbReference type="Pfam" id="PF00574">
    <property type="entry name" value="CLP_protease"/>
    <property type="match status" value="1"/>
</dbReference>
<dbReference type="PRINTS" id="PR00127">
    <property type="entry name" value="CLPPROTEASEP"/>
</dbReference>
<dbReference type="SUPFAM" id="SSF52096">
    <property type="entry name" value="ClpP/crotonase"/>
    <property type="match status" value="1"/>
</dbReference>
<dbReference type="PROSITE" id="PS00382">
    <property type="entry name" value="CLP_PROTEASE_HIS"/>
    <property type="match status" value="1"/>
</dbReference>
<name>CLPP_ACTP2</name>